<dbReference type="EC" id="1.4.4.2" evidence="1"/>
<dbReference type="EMBL" id="BA000011">
    <property type="protein sequence ID" value="BAB59443.1"/>
    <property type="molecule type" value="Genomic_DNA"/>
</dbReference>
<dbReference type="RefSeq" id="WP_010916556.1">
    <property type="nucleotide sequence ID" value="NC_002689.2"/>
</dbReference>
<dbReference type="SMR" id="Q97C04"/>
<dbReference type="STRING" id="273116.gene:9381075"/>
<dbReference type="PaxDb" id="273116-14324516"/>
<dbReference type="GeneID" id="1440814"/>
<dbReference type="KEGG" id="tvo:TVG0311358"/>
<dbReference type="eggNOG" id="arCOG00076">
    <property type="taxonomic scope" value="Archaea"/>
</dbReference>
<dbReference type="HOGENOM" id="CLU_004620_5_0_2"/>
<dbReference type="OrthoDB" id="371967at2157"/>
<dbReference type="PhylomeDB" id="Q97C04"/>
<dbReference type="Proteomes" id="UP000001017">
    <property type="component" value="Chromosome"/>
</dbReference>
<dbReference type="GO" id="GO:0005829">
    <property type="term" value="C:cytosol"/>
    <property type="evidence" value="ECO:0007669"/>
    <property type="project" value="TreeGrafter"/>
</dbReference>
<dbReference type="GO" id="GO:0005960">
    <property type="term" value="C:glycine cleavage complex"/>
    <property type="evidence" value="ECO:0007669"/>
    <property type="project" value="TreeGrafter"/>
</dbReference>
<dbReference type="GO" id="GO:0016594">
    <property type="term" value="F:glycine binding"/>
    <property type="evidence" value="ECO:0007669"/>
    <property type="project" value="TreeGrafter"/>
</dbReference>
<dbReference type="GO" id="GO:0004375">
    <property type="term" value="F:glycine dehydrogenase (decarboxylating) activity"/>
    <property type="evidence" value="ECO:0007669"/>
    <property type="project" value="UniProtKB-EC"/>
</dbReference>
<dbReference type="GO" id="GO:0030170">
    <property type="term" value="F:pyridoxal phosphate binding"/>
    <property type="evidence" value="ECO:0007669"/>
    <property type="project" value="TreeGrafter"/>
</dbReference>
<dbReference type="GO" id="GO:0019464">
    <property type="term" value="P:glycine decarboxylation via glycine cleavage system"/>
    <property type="evidence" value="ECO:0007669"/>
    <property type="project" value="UniProtKB-UniRule"/>
</dbReference>
<dbReference type="CDD" id="cd00613">
    <property type="entry name" value="GDC-P"/>
    <property type="match status" value="1"/>
</dbReference>
<dbReference type="FunFam" id="3.40.640.10:FF:000224">
    <property type="entry name" value="Probable glycine dehydrogenase (decarboxylating) subunit 2"/>
    <property type="match status" value="1"/>
</dbReference>
<dbReference type="Gene3D" id="6.20.440.10">
    <property type="match status" value="1"/>
</dbReference>
<dbReference type="Gene3D" id="3.90.1150.10">
    <property type="entry name" value="Aspartate Aminotransferase, domain 1"/>
    <property type="match status" value="1"/>
</dbReference>
<dbReference type="Gene3D" id="3.40.640.10">
    <property type="entry name" value="Type I PLP-dependent aspartate aminotransferase-like (Major domain)"/>
    <property type="match status" value="1"/>
</dbReference>
<dbReference type="HAMAP" id="MF_00713">
    <property type="entry name" value="GcvPB"/>
    <property type="match status" value="1"/>
</dbReference>
<dbReference type="InterPro" id="IPR000192">
    <property type="entry name" value="Aminotrans_V_dom"/>
</dbReference>
<dbReference type="InterPro" id="IPR023012">
    <property type="entry name" value="GcvPB"/>
</dbReference>
<dbReference type="InterPro" id="IPR049316">
    <property type="entry name" value="GDC-P_C"/>
</dbReference>
<dbReference type="InterPro" id="IPR020581">
    <property type="entry name" value="GDC_P"/>
</dbReference>
<dbReference type="InterPro" id="IPR015424">
    <property type="entry name" value="PyrdxlP-dep_Trfase"/>
</dbReference>
<dbReference type="InterPro" id="IPR015421">
    <property type="entry name" value="PyrdxlP-dep_Trfase_major"/>
</dbReference>
<dbReference type="InterPro" id="IPR015422">
    <property type="entry name" value="PyrdxlP-dep_Trfase_small"/>
</dbReference>
<dbReference type="NCBIfam" id="NF003346">
    <property type="entry name" value="PRK04366.1"/>
    <property type="match status" value="1"/>
</dbReference>
<dbReference type="PANTHER" id="PTHR11773:SF1">
    <property type="entry name" value="GLYCINE DEHYDROGENASE (DECARBOXYLATING), MITOCHONDRIAL"/>
    <property type="match status" value="1"/>
</dbReference>
<dbReference type="PANTHER" id="PTHR11773">
    <property type="entry name" value="GLYCINE DEHYDROGENASE, DECARBOXYLATING"/>
    <property type="match status" value="1"/>
</dbReference>
<dbReference type="Pfam" id="PF00266">
    <property type="entry name" value="Aminotran_5"/>
    <property type="match status" value="1"/>
</dbReference>
<dbReference type="Pfam" id="PF21478">
    <property type="entry name" value="GcvP2_C"/>
    <property type="match status" value="1"/>
</dbReference>
<dbReference type="SUPFAM" id="SSF53383">
    <property type="entry name" value="PLP-dependent transferases"/>
    <property type="match status" value="1"/>
</dbReference>
<proteinExistence type="inferred from homology"/>
<name>GCSPB_THEVO</name>
<keyword id="KW-0560">Oxidoreductase</keyword>
<keyword id="KW-0663">Pyridoxal phosphate</keyword>
<accession>Q97C04</accession>
<feature type="chain" id="PRO_0000167034" description="Probable glycine dehydrogenase (decarboxylating) subunit 2">
    <location>
        <begin position="1"/>
        <end position="472"/>
    </location>
</feature>
<feature type="modified residue" description="N6-(pyridoxal phosphate)lysine" evidence="1">
    <location>
        <position position="268"/>
    </location>
</feature>
<organism>
    <name type="scientific">Thermoplasma volcanium (strain ATCC 51530 / DSM 4299 / JCM 9571 / NBRC 15438 / GSS1)</name>
    <dbReference type="NCBI Taxonomy" id="273116"/>
    <lineage>
        <taxon>Archaea</taxon>
        <taxon>Methanobacteriati</taxon>
        <taxon>Thermoplasmatota</taxon>
        <taxon>Thermoplasmata</taxon>
        <taxon>Thermoplasmatales</taxon>
        <taxon>Thermoplasmataceae</taxon>
        <taxon>Thermoplasma</taxon>
    </lineage>
</organism>
<comment type="function">
    <text evidence="1">The glycine cleavage system catalyzes the degradation of glycine. The P protein binds the alpha-amino group of glycine through its pyridoxal phosphate cofactor; CO(2) is released and the remaining methylamine moiety is then transferred to the lipoamide cofactor of the H protein.</text>
</comment>
<comment type="catalytic activity">
    <reaction evidence="1">
        <text>N(6)-[(R)-lipoyl]-L-lysyl-[glycine-cleavage complex H protein] + glycine + H(+) = N(6)-[(R)-S(8)-aminomethyldihydrolipoyl]-L-lysyl-[glycine-cleavage complex H protein] + CO2</text>
        <dbReference type="Rhea" id="RHEA:24304"/>
        <dbReference type="Rhea" id="RHEA-COMP:10494"/>
        <dbReference type="Rhea" id="RHEA-COMP:10495"/>
        <dbReference type="ChEBI" id="CHEBI:15378"/>
        <dbReference type="ChEBI" id="CHEBI:16526"/>
        <dbReference type="ChEBI" id="CHEBI:57305"/>
        <dbReference type="ChEBI" id="CHEBI:83099"/>
        <dbReference type="ChEBI" id="CHEBI:83143"/>
        <dbReference type="EC" id="1.4.4.2"/>
    </reaction>
</comment>
<comment type="cofactor">
    <cofactor evidence="1">
        <name>pyridoxal 5'-phosphate</name>
        <dbReference type="ChEBI" id="CHEBI:597326"/>
    </cofactor>
</comment>
<comment type="subunit">
    <text evidence="1">The glycine cleavage system is composed of four proteins: P, T, L and H. In this organism, the P 'protein' is a heterodimer of two subunits.</text>
</comment>
<comment type="similarity">
    <text evidence="1">Belongs to the GcvP family. C-terminal subunit subfamily.</text>
</comment>
<protein>
    <recommendedName>
        <fullName evidence="1">Probable glycine dehydrogenase (decarboxylating) subunit 2</fullName>
        <ecNumber evidence="1">1.4.4.2</ecNumber>
    </recommendedName>
    <alternativeName>
        <fullName evidence="1">Glycine cleavage system P-protein subunit 2</fullName>
    </alternativeName>
    <alternativeName>
        <fullName evidence="1">Glycine decarboxylase subunit 2</fullName>
    </alternativeName>
    <alternativeName>
        <fullName evidence="1">Glycine dehydrogenase (aminomethyl-transferring) subunit 2</fullName>
    </alternativeName>
</protein>
<sequence>MNFKQAYYEEPIIKDIKSSNTFSLSEQVDESILPENLKRKDLELPEVSEYDVVRHYTRLSQMNYTVDVGIYPLGSCTMKYNPKFADRVSAIDGFRNIHPFQPENTVQGALHVMYDLQEYLKKISDMDAVSLQPMAGADGEFTGILIVKKYFEDKGEDRTEIIIPDSAHGTNPASATMGGFDVVEVPSDDKGMVDLEALRAAVSKKTAAFMITNPNTLGIFEQNIEEIAKIIHNAGALLYYDGANLNAIFGITSPGLMGFDIVHFNLHKSFATPHGGGGPGAGPVAVKSFLKDFLPVPIVDFDGNSYRLNYELKKTIGKVSSFYGSFSILLRAWSYIIRNGDDGLKNVSARAVLNSNYLKKKLEKYYDIPYYPLKKHEFVLSTENTGKRALDIGKYILDNGIHSPTVYFPLIVKEAMMIEPTETVSKADLDNYADVLIEALKLSDEELKSRPKNTAVRRIDEVKAARDLKLKW</sequence>
<gene>
    <name evidence="1" type="primary">gcvPB</name>
    <name type="ordered locus">TV0301</name>
    <name type="ORF">TVG0311358</name>
</gene>
<evidence type="ECO:0000255" key="1">
    <source>
        <dbReference type="HAMAP-Rule" id="MF_00713"/>
    </source>
</evidence>
<reference key="1">
    <citation type="journal article" date="2000" name="Proc. Natl. Acad. Sci. U.S.A.">
        <title>Archaeal adaptation to higher temperatures revealed by genomic sequence of Thermoplasma volcanium.</title>
        <authorList>
            <person name="Kawashima T."/>
            <person name="Amano N."/>
            <person name="Koike H."/>
            <person name="Makino S."/>
            <person name="Higuchi S."/>
            <person name="Kawashima-Ohya Y."/>
            <person name="Watanabe K."/>
            <person name="Yamazaki M."/>
            <person name="Kanehori K."/>
            <person name="Kawamoto T."/>
            <person name="Nunoshiba T."/>
            <person name="Yamamoto Y."/>
            <person name="Aramaki H."/>
            <person name="Makino K."/>
            <person name="Suzuki M."/>
        </authorList>
    </citation>
    <scope>NUCLEOTIDE SEQUENCE [LARGE SCALE GENOMIC DNA]</scope>
    <source>
        <strain>ATCC 51530 / DSM 4299 / JCM 9571 / NBRC 15438 / GSS1</strain>
    </source>
</reference>